<evidence type="ECO:0000255" key="1">
    <source>
        <dbReference type="HAMAP-Rule" id="MF_01208"/>
    </source>
</evidence>
<organism>
    <name type="scientific">Deinococcus radiodurans (strain ATCC 13939 / DSM 20539 / JCM 16871 / CCUG 27074 / LMG 4051 / NBRC 15346 / NCIMB 9279 / VKM B-1422 / R1)</name>
    <dbReference type="NCBI Taxonomy" id="243230"/>
    <lineage>
        <taxon>Bacteria</taxon>
        <taxon>Thermotogati</taxon>
        <taxon>Deinococcota</taxon>
        <taxon>Deinococci</taxon>
        <taxon>Deinococcales</taxon>
        <taxon>Deinococcaceae</taxon>
        <taxon>Deinococcus</taxon>
    </lineage>
</organism>
<sequence length="194" mass="21109">MSQTDVLDLYKQAGAFHEGRFLLASGRQSPYFMQSTTLLQHPRALMELGGLMSQKILDAGLKPDFIVGPAMGGVTLAYEVARQLSETLPDVRAIFAEKDGSGGMKLREAFAVRPGETFVAVEDVLTTGGSLLRAVRAVEGQGGQCIGLCCIIDRRQQTGPLSGYPLMSLKELYFDTYASHEVPGWLAERPLQEI</sequence>
<proteinExistence type="inferred from homology"/>
<comment type="function">
    <text evidence="1">Catalyzes the transfer of a ribosyl phosphate group from 5-phosphoribose 1-diphosphate to orotate, leading to the formation of orotidine monophosphate (OMP).</text>
</comment>
<comment type="catalytic activity">
    <reaction evidence="1">
        <text>orotidine 5'-phosphate + diphosphate = orotate + 5-phospho-alpha-D-ribose 1-diphosphate</text>
        <dbReference type="Rhea" id="RHEA:10380"/>
        <dbReference type="ChEBI" id="CHEBI:30839"/>
        <dbReference type="ChEBI" id="CHEBI:33019"/>
        <dbReference type="ChEBI" id="CHEBI:57538"/>
        <dbReference type="ChEBI" id="CHEBI:58017"/>
        <dbReference type="EC" id="2.4.2.10"/>
    </reaction>
</comment>
<comment type="cofactor">
    <cofactor evidence="1">
        <name>Mg(2+)</name>
        <dbReference type="ChEBI" id="CHEBI:18420"/>
    </cofactor>
</comment>
<comment type="pathway">
    <text evidence="1">Pyrimidine metabolism; UMP biosynthesis via de novo pathway; UMP from orotate: step 1/2.</text>
</comment>
<comment type="subunit">
    <text evidence="1">Homodimer.</text>
</comment>
<comment type="similarity">
    <text evidence="1">Belongs to the purine/pyrimidine phosphoribosyltransferase family. PyrE subfamily.</text>
</comment>
<accession>Q9RX68</accession>
<keyword id="KW-0328">Glycosyltransferase</keyword>
<keyword id="KW-0460">Magnesium</keyword>
<keyword id="KW-0665">Pyrimidine biosynthesis</keyword>
<keyword id="KW-1185">Reference proteome</keyword>
<keyword id="KW-0808">Transferase</keyword>
<protein>
    <recommendedName>
        <fullName evidence="1">Orotate phosphoribosyltransferase</fullName>
        <shortName evidence="1">OPRT</shortName>
        <shortName evidence="1">OPRTase</shortName>
        <ecNumber evidence="1">2.4.2.10</ecNumber>
    </recommendedName>
</protein>
<name>PYRE_DEIRA</name>
<reference key="1">
    <citation type="journal article" date="1999" name="Science">
        <title>Genome sequence of the radioresistant bacterium Deinococcus radiodurans R1.</title>
        <authorList>
            <person name="White O."/>
            <person name="Eisen J.A."/>
            <person name="Heidelberg J.F."/>
            <person name="Hickey E.K."/>
            <person name="Peterson J.D."/>
            <person name="Dodson R.J."/>
            <person name="Haft D.H."/>
            <person name="Gwinn M.L."/>
            <person name="Nelson W.C."/>
            <person name="Richardson D.L."/>
            <person name="Moffat K.S."/>
            <person name="Qin H."/>
            <person name="Jiang L."/>
            <person name="Pamphile W."/>
            <person name="Crosby M."/>
            <person name="Shen M."/>
            <person name="Vamathevan J.J."/>
            <person name="Lam P."/>
            <person name="McDonald L.A."/>
            <person name="Utterback T.R."/>
            <person name="Zalewski C."/>
            <person name="Makarova K.S."/>
            <person name="Aravind L."/>
            <person name="Daly M.J."/>
            <person name="Minton K.W."/>
            <person name="Fleischmann R.D."/>
            <person name="Ketchum K.A."/>
            <person name="Nelson K.E."/>
            <person name="Salzberg S.L."/>
            <person name="Smith H.O."/>
            <person name="Venter J.C."/>
            <person name="Fraser C.M."/>
        </authorList>
    </citation>
    <scope>NUCLEOTIDE SEQUENCE [LARGE SCALE GENOMIC DNA]</scope>
    <source>
        <strain>ATCC 13939 / DSM 20539 / JCM 16871 / CCUG 27074 / LMG 4051 / NBRC 15346 / NCIMB 9279 / VKM B-1422 / R1</strain>
    </source>
</reference>
<dbReference type="EC" id="2.4.2.10" evidence="1"/>
<dbReference type="EMBL" id="AE000513">
    <property type="protein sequence ID" value="AAF10026.1"/>
    <property type="molecule type" value="Genomic_DNA"/>
</dbReference>
<dbReference type="PIR" id="C75517">
    <property type="entry name" value="C75517"/>
</dbReference>
<dbReference type="RefSeq" id="NP_294170.1">
    <property type="nucleotide sequence ID" value="NC_001263.1"/>
</dbReference>
<dbReference type="RefSeq" id="WP_010887092.1">
    <property type="nucleotide sequence ID" value="NC_001263.1"/>
</dbReference>
<dbReference type="SMR" id="Q9RX68"/>
<dbReference type="FunCoup" id="Q9RX68">
    <property type="interactions" value="189"/>
</dbReference>
<dbReference type="STRING" id="243230.DR_0447"/>
<dbReference type="PaxDb" id="243230-DR_0447"/>
<dbReference type="EnsemblBacteria" id="AAF10026">
    <property type="protein sequence ID" value="AAF10026"/>
    <property type="gene ID" value="DR_0447"/>
</dbReference>
<dbReference type="GeneID" id="69516680"/>
<dbReference type="KEGG" id="dra:DR_0447"/>
<dbReference type="PATRIC" id="fig|243230.17.peg.623"/>
<dbReference type="eggNOG" id="COG0461">
    <property type="taxonomic scope" value="Bacteria"/>
</dbReference>
<dbReference type="HOGENOM" id="CLU_074878_3_0_0"/>
<dbReference type="InParanoid" id="Q9RX68"/>
<dbReference type="OrthoDB" id="9783570at2"/>
<dbReference type="UniPathway" id="UPA00070">
    <property type="reaction ID" value="UER00119"/>
</dbReference>
<dbReference type="Proteomes" id="UP000002524">
    <property type="component" value="Chromosome 1"/>
</dbReference>
<dbReference type="GO" id="GO:0000287">
    <property type="term" value="F:magnesium ion binding"/>
    <property type="evidence" value="ECO:0007669"/>
    <property type="project" value="UniProtKB-UniRule"/>
</dbReference>
<dbReference type="GO" id="GO:0004588">
    <property type="term" value="F:orotate phosphoribosyltransferase activity"/>
    <property type="evidence" value="ECO:0000318"/>
    <property type="project" value="GO_Central"/>
</dbReference>
<dbReference type="GO" id="GO:0044205">
    <property type="term" value="P:'de novo' UMP biosynthetic process"/>
    <property type="evidence" value="ECO:0007669"/>
    <property type="project" value="UniProtKB-UniRule"/>
</dbReference>
<dbReference type="GO" id="GO:0019856">
    <property type="term" value="P:pyrimidine nucleobase biosynthetic process"/>
    <property type="evidence" value="ECO:0000318"/>
    <property type="project" value="GO_Central"/>
</dbReference>
<dbReference type="GO" id="GO:0006222">
    <property type="term" value="P:UMP biosynthetic process"/>
    <property type="evidence" value="ECO:0000318"/>
    <property type="project" value="GO_Central"/>
</dbReference>
<dbReference type="CDD" id="cd06223">
    <property type="entry name" value="PRTases_typeI"/>
    <property type="match status" value="1"/>
</dbReference>
<dbReference type="Gene3D" id="3.40.50.2020">
    <property type="match status" value="1"/>
</dbReference>
<dbReference type="HAMAP" id="MF_01208">
    <property type="entry name" value="PyrE"/>
    <property type="match status" value="1"/>
</dbReference>
<dbReference type="InterPro" id="IPR023031">
    <property type="entry name" value="OPRT"/>
</dbReference>
<dbReference type="InterPro" id="IPR006273">
    <property type="entry name" value="Orotate_PRibTrfase_bac"/>
</dbReference>
<dbReference type="InterPro" id="IPR000836">
    <property type="entry name" value="PRibTrfase_dom"/>
</dbReference>
<dbReference type="InterPro" id="IPR029057">
    <property type="entry name" value="PRTase-like"/>
</dbReference>
<dbReference type="NCBIfam" id="TIGR01367">
    <property type="entry name" value="pyrE_Therm"/>
    <property type="match status" value="1"/>
</dbReference>
<dbReference type="PANTHER" id="PTHR19278">
    <property type="entry name" value="OROTATE PHOSPHORIBOSYLTRANSFERASE"/>
    <property type="match status" value="1"/>
</dbReference>
<dbReference type="PANTHER" id="PTHR19278:SF9">
    <property type="entry name" value="URIDINE 5'-MONOPHOSPHATE SYNTHASE"/>
    <property type="match status" value="1"/>
</dbReference>
<dbReference type="Pfam" id="PF00156">
    <property type="entry name" value="Pribosyltran"/>
    <property type="match status" value="1"/>
</dbReference>
<dbReference type="SUPFAM" id="SSF53271">
    <property type="entry name" value="PRTase-like"/>
    <property type="match status" value="1"/>
</dbReference>
<dbReference type="PROSITE" id="PS00103">
    <property type="entry name" value="PUR_PYR_PR_TRANSFER"/>
    <property type="match status" value="1"/>
</dbReference>
<gene>
    <name evidence="1" type="primary">pyrE</name>
    <name type="ordered locus">DR_0447</name>
</gene>
<feature type="chain" id="PRO_0000110693" description="Orotate phosphoribosyltransferase">
    <location>
        <begin position="1"/>
        <end position="194"/>
    </location>
</feature>
<feature type="binding site" evidence="1">
    <location>
        <position position="98"/>
    </location>
    <ligand>
        <name>5-phospho-alpha-D-ribose 1-diphosphate</name>
        <dbReference type="ChEBI" id="CHEBI:58017"/>
    </ligand>
</feature>
<feature type="binding site" evidence="1">
    <location>
        <begin position="122"/>
        <end position="130"/>
    </location>
    <ligand>
        <name>5-phospho-alpha-D-ribose 1-diphosphate</name>
        <dbReference type="ChEBI" id="CHEBI:58017"/>
    </ligand>
</feature>
<feature type="binding site" evidence="1">
    <location>
        <position position="126"/>
    </location>
    <ligand>
        <name>orotate</name>
        <dbReference type="ChEBI" id="CHEBI:30839"/>
    </ligand>
</feature>
<feature type="binding site" evidence="1">
    <location>
        <position position="154"/>
    </location>
    <ligand>
        <name>orotate</name>
        <dbReference type="ChEBI" id="CHEBI:30839"/>
    </ligand>
</feature>